<name>ZBT18_XENTR</name>
<proteinExistence type="evidence at transcript level"/>
<accession>Q0IJ29</accession>
<accession>Q28FU6</accession>
<keyword id="KW-0238">DNA-binding</keyword>
<keyword id="KW-0479">Metal-binding</keyword>
<keyword id="KW-0539">Nucleus</keyword>
<keyword id="KW-1185">Reference proteome</keyword>
<keyword id="KW-0677">Repeat</keyword>
<keyword id="KW-0678">Repressor</keyword>
<keyword id="KW-0804">Transcription</keyword>
<keyword id="KW-0805">Transcription regulation</keyword>
<keyword id="KW-0862">Zinc</keyword>
<keyword id="KW-0863">Zinc-finger</keyword>
<reference key="1">
    <citation type="submission" date="2006-08" db="EMBL/GenBank/DDBJ databases">
        <authorList>
            <consortium name="NIH - Xenopus Gene Collection (XGC) project"/>
        </authorList>
    </citation>
    <scope>NUCLEOTIDE SEQUENCE [LARGE SCALE MRNA]</scope>
    <source>
        <tissue>Brain</tissue>
    </source>
</reference>
<reference key="2">
    <citation type="submission" date="2006-10" db="EMBL/GenBank/DDBJ databases">
        <authorList>
            <consortium name="Sanger Xenopus tropicalis EST/cDNA project"/>
        </authorList>
    </citation>
    <scope>NUCLEOTIDE SEQUENCE [LARGE SCALE MRNA] OF 1-316</scope>
    <source>
        <tissue>Gastrula</tissue>
    </source>
</reference>
<dbReference type="EMBL" id="BC121215">
    <property type="protein sequence ID" value="AAI21216.1"/>
    <property type="molecule type" value="mRNA"/>
</dbReference>
<dbReference type="EMBL" id="CR761742">
    <property type="protein sequence ID" value="CAJ83468.1"/>
    <property type="molecule type" value="mRNA"/>
</dbReference>
<dbReference type="RefSeq" id="NP_001016948.2">
    <property type="nucleotide sequence ID" value="NM_001016948.3"/>
</dbReference>
<dbReference type="SMR" id="Q0IJ29"/>
<dbReference type="FunCoup" id="Q0IJ29">
    <property type="interactions" value="2354"/>
</dbReference>
<dbReference type="STRING" id="8364.ENSXETP00000049254"/>
<dbReference type="PaxDb" id="8364-ENSXETP00000031817"/>
<dbReference type="GeneID" id="549702"/>
<dbReference type="KEGG" id="xtr:549702"/>
<dbReference type="AGR" id="Xenbase:XB-GENE-1003542"/>
<dbReference type="CTD" id="10472"/>
<dbReference type="Xenbase" id="XB-GENE-1003542">
    <property type="gene designation" value="zbtb18"/>
</dbReference>
<dbReference type="eggNOG" id="KOG1721">
    <property type="taxonomic scope" value="Eukaryota"/>
</dbReference>
<dbReference type="HOGENOM" id="CLU_034521_0_0_1"/>
<dbReference type="InParanoid" id="Q0IJ29"/>
<dbReference type="OrthoDB" id="4748970at2759"/>
<dbReference type="Proteomes" id="UP000008143">
    <property type="component" value="Chromosome 5"/>
</dbReference>
<dbReference type="GO" id="GO:0005634">
    <property type="term" value="C:nucleus"/>
    <property type="evidence" value="ECO:0007669"/>
    <property type="project" value="UniProtKB-SubCell"/>
</dbReference>
<dbReference type="GO" id="GO:0003677">
    <property type="term" value="F:DNA binding"/>
    <property type="evidence" value="ECO:0007669"/>
    <property type="project" value="UniProtKB-KW"/>
</dbReference>
<dbReference type="GO" id="GO:0008270">
    <property type="term" value="F:zinc ion binding"/>
    <property type="evidence" value="ECO:0007669"/>
    <property type="project" value="UniProtKB-KW"/>
</dbReference>
<dbReference type="CDD" id="cd18324">
    <property type="entry name" value="BTB_POZ_ZBTB18_RP58"/>
    <property type="match status" value="1"/>
</dbReference>
<dbReference type="FunFam" id="3.30.160.60:FF:000646">
    <property type="entry name" value="Myeloid zinc finger 1"/>
    <property type="match status" value="1"/>
</dbReference>
<dbReference type="FunFam" id="3.30.160.60:FF:000114">
    <property type="entry name" value="Zinc finger and BTB domain-containing protein 18"/>
    <property type="match status" value="1"/>
</dbReference>
<dbReference type="FunFam" id="3.30.710.10:FF:000021">
    <property type="entry name" value="Zinc finger and BTB domain-containing protein 18"/>
    <property type="match status" value="1"/>
</dbReference>
<dbReference type="FunFam" id="3.30.160.60:FF:000892">
    <property type="entry name" value="zinc finger and BTB domain-containing protein 3"/>
    <property type="match status" value="1"/>
</dbReference>
<dbReference type="Gene3D" id="3.30.160.60">
    <property type="entry name" value="Classic Zinc Finger"/>
    <property type="match status" value="3"/>
</dbReference>
<dbReference type="Gene3D" id="3.30.710.10">
    <property type="entry name" value="Potassium Channel Kv1.1, Chain A"/>
    <property type="match status" value="1"/>
</dbReference>
<dbReference type="InterPro" id="IPR000210">
    <property type="entry name" value="BTB/POZ_dom"/>
</dbReference>
<dbReference type="InterPro" id="IPR011333">
    <property type="entry name" value="SKP1/BTB/POZ_sf"/>
</dbReference>
<dbReference type="InterPro" id="IPR036236">
    <property type="entry name" value="Znf_C2H2_sf"/>
</dbReference>
<dbReference type="InterPro" id="IPR013087">
    <property type="entry name" value="Znf_C2H2_type"/>
</dbReference>
<dbReference type="PANTHER" id="PTHR24394:SF18">
    <property type="entry name" value="ZINC FINGER AND BTB DOMAIN-CONTAINING PROTEIN 18"/>
    <property type="match status" value="1"/>
</dbReference>
<dbReference type="PANTHER" id="PTHR24394">
    <property type="entry name" value="ZINC FINGER PROTEIN"/>
    <property type="match status" value="1"/>
</dbReference>
<dbReference type="Pfam" id="PF00651">
    <property type="entry name" value="BTB"/>
    <property type="match status" value="1"/>
</dbReference>
<dbReference type="Pfam" id="PF00096">
    <property type="entry name" value="zf-C2H2"/>
    <property type="match status" value="3"/>
</dbReference>
<dbReference type="Pfam" id="PF13894">
    <property type="entry name" value="zf-C2H2_4"/>
    <property type="match status" value="1"/>
</dbReference>
<dbReference type="SMART" id="SM00225">
    <property type="entry name" value="BTB"/>
    <property type="match status" value="1"/>
</dbReference>
<dbReference type="SMART" id="SM00355">
    <property type="entry name" value="ZnF_C2H2"/>
    <property type="match status" value="4"/>
</dbReference>
<dbReference type="SUPFAM" id="SSF57667">
    <property type="entry name" value="beta-beta-alpha zinc fingers"/>
    <property type="match status" value="3"/>
</dbReference>
<dbReference type="SUPFAM" id="SSF54695">
    <property type="entry name" value="POZ domain"/>
    <property type="match status" value="1"/>
</dbReference>
<dbReference type="PROSITE" id="PS50097">
    <property type="entry name" value="BTB"/>
    <property type="match status" value="1"/>
</dbReference>
<dbReference type="PROSITE" id="PS00028">
    <property type="entry name" value="ZINC_FINGER_C2H2_1"/>
    <property type="match status" value="4"/>
</dbReference>
<dbReference type="PROSITE" id="PS50157">
    <property type="entry name" value="ZINC_FINGER_C2H2_2"/>
    <property type="match status" value="4"/>
</dbReference>
<protein>
    <recommendedName>
        <fullName>Zinc finger and BTB domain-containing protein 18</fullName>
    </recommendedName>
    <alternativeName>
        <fullName>Zinc finger protein 238</fullName>
    </alternativeName>
</protein>
<feature type="chain" id="PRO_0000391929" description="Zinc finger and BTB domain-containing protein 18">
    <location>
        <begin position="1"/>
        <end position="521"/>
    </location>
</feature>
<feature type="domain" description="BTB" evidence="2">
    <location>
        <begin position="24"/>
        <end position="91"/>
    </location>
</feature>
<feature type="zinc finger region" description="C2H2-type 1" evidence="3">
    <location>
        <begin position="369"/>
        <end position="391"/>
    </location>
</feature>
<feature type="zinc finger region" description="C2H2-type 2" evidence="3">
    <location>
        <begin position="409"/>
        <end position="431"/>
    </location>
</feature>
<feature type="zinc finger region" description="C2H2-type 3" evidence="3">
    <location>
        <begin position="437"/>
        <end position="459"/>
    </location>
</feature>
<feature type="zinc finger region" description="C2H2-type 4" evidence="3">
    <location>
        <begin position="465"/>
        <end position="488"/>
    </location>
</feature>
<feature type="region of interest" description="Disordered" evidence="4">
    <location>
        <begin position="190"/>
        <end position="230"/>
    </location>
</feature>
<feature type="compositionally biased region" description="Low complexity" evidence="4">
    <location>
        <begin position="197"/>
        <end position="212"/>
    </location>
</feature>
<feature type="compositionally biased region" description="Polar residues" evidence="4">
    <location>
        <begin position="214"/>
        <end position="230"/>
    </location>
</feature>
<feature type="sequence conflict" description="In Ref. 2; CAJ83468." evidence="5" ref="2">
    <original>P</original>
    <variation>I</variation>
    <location>
        <position position="316"/>
    </location>
</feature>
<evidence type="ECO:0000250" key="1"/>
<evidence type="ECO:0000255" key="2">
    <source>
        <dbReference type="PROSITE-ProRule" id="PRU00037"/>
    </source>
</evidence>
<evidence type="ECO:0000255" key="3">
    <source>
        <dbReference type="PROSITE-ProRule" id="PRU00042"/>
    </source>
</evidence>
<evidence type="ECO:0000256" key="4">
    <source>
        <dbReference type="SAM" id="MobiDB-lite"/>
    </source>
</evidence>
<evidence type="ECO:0000305" key="5"/>
<organism>
    <name type="scientific">Xenopus tropicalis</name>
    <name type="common">Western clawed frog</name>
    <name type="synonym">Silurana tropicalis</name>
    <dbReference type="NCBI Taxonomy" id="8364"/>
    <lineage>
        <taxon>Eukaryota</taxon>
        <taxon>Metazoa</taxon>
        <taxon>Chordata</taxon>
        <taxon>Craniata</taxon>
        <taxon>Vertebrata</taxon>
        <taxon>Euteleostomi</taxon>
        <taxon>Amphibia</taxon>
        <taxon>Batrachia</taxon>
        <taxon>Anura</taxon>
        <taxon>Pipoidea</taxon>
        <taxon>Pipidae</taxon>
        <taxon>Xenopodinae</taxon>
        <taxon>Xenopus</taxon>
        <taxon>Silurana</taxon>
    </lineage>
</organism>
<comment type="function">
    <text evidence="1">Transcriptional repressor that plays a role in various developmental processes. Specifically binds the consensus DNA sequence 5'-[AC]ACATCTG[GT][AC]-3' which contains the E box core, and acts by recruiting chromatin remodeling multiprotein complexes (By similarity).</text>
</comment>
<comment type="subcellular location">
    <subcellularLocation>
        <location evidence="1">Nucleus</location>
    </subcellularLocation>
</comment>
<comment type="similarity">
    <text evidence="5">Belongs to the krueppel C2H2-type zinc-finger protein family. ZBTB18 subfamily.</text>
</comment>
<gene>
    <name type="primary">zbtb18</name>
    <name type="synonym">znf238</name>
    <name type="ORF">TGas069c09.1</name>
</gene>
<sequence>MEFPEHSRHLLQCLSEQRHQGFLCDCTVLVGDAHFRAHRAVLASCSMYFHLFYKDQLDKRDIVHLNSDIVTAPAFALLLEFMYEGKLQFKDLPIEDVLAAASYLHMYDIVKVCKKKLKEKATTEADSTKKEEDASSCSDKIECLSDGSSHMAGDLPSDEDDVEEEKINILPGKTDLATESGNMWIRLPSDSASIPQTGGEAETHTAAAGKTADSPCSSTGSLSHRSATSMRDSADVDCVLDLSVKSSLSGAETLNNSYLSSQEILRNSLVQVKVEKEASCDENDIDTTEYDIERNTVKESSSSNIRAPYEPVHLAPIREDSVLRELDHDDKASDDDITPENERVQMETNMDSSLLPYVPNILSPAGQIFMCPLCNKVFPSPHILQIHLSTHFREQEGIRSKPANDVHVPTCSLCGKTFSCMYTLKRHERTHSGEKPFTCTQCGKSFQYSHNLSRHAVVHTREKPHACKWCERRFTQSGDLYRHIRKFHCELVNSLSVKSETLGLPAVRDWTLEDSSQELWK</sequence>